<keyword id="KW-0067">ATP-binding</keyword>
<keyword id="KW-0418">Kinase</keyword>
<keyword id="KW-0545">Nucleotide biosynthesis</keyword>
<keyword id="KW-0547">Nucleotide-binding</keyword>
<keyword id="KW-0808">Transferase</keyword>
<reference key="1">
    <citation type="submission" date="2003-03" db="EMBL/GenBank/DDBJ databases">
        <title>Structure-function and organization of cowpox virus strain GRI-90 complete genome.</title>
        <authorList>
            <person name="Shchelkunov S.N."/>
            <person name="Safronov P.F."/>
            <person name="Totmenin A.V."/>
            <person name="Miheev M.V."/>
            <person name="Ryazankina O.I."/>
            <person name="Petrov N.A."/>
            <person name="Gutorov V.V."/>
            <person name="Kotwal G.J."/>
            <person name="Sandakhchiev L.S."/>
        </authorList>
    </citation>
    <scope>NUCLEOTIDE SEQUENCE [LARGE SCALE GENOMIC DNA]</scope>
</reference>
<sequence length="204" mass="23263">MSRGALIVFEGLDKSGKTTQCMNIMESIPSNTIKYLNFPQRSTVTGKMIDDYLTRKKTYNDHIVNLLFCANRWEFASFIQEQLEQGITLIVDRYAFSGVAYAAAKGASMTLSKSYESGLPKPDLVIFLESGSKEINRNVGEEIYEDVEFQQKVLQEYKKMIEEGDIHWQIISSEFEEDVKKELIKNIVIEAIHTVTGPVGQLWM</sequence>
<feature type="chain" id="PRO_0000155224" description="Thymidylate kinase">
    <location>
        <begin position="1"/>
        <end position="204"/>
    </location>
</feature>
<feature type="binding site" evidence="1">
    <location>
        <begin position="11"/>
        <end position="18"/>
    </location>
    <ligand>
        <name>ATP</name>
        <dbReference type="ChEBI" id="CHEBI:30616"/>
    </ligand>
</feature>
<name>KTHY_CWPXG</name>
<protein>
    <recommendedName>
        <fullName>Thymidylate kinase</fullName>
        <ecNumber>2.7.4.9</ecNumber>
    </recommendedName>
    <alternativeName>
        <fullName>dTMP kinase</fullName>
    </alternativeName>
</protein>
<organism>
    <name type="scientific">Cowpox virus (strain GRI-90 / Grishak)</name>
    <name type="common">CPV</name>
    <dbReference type="NCBI Taxonomy" id="265871"/>
    <lineage>
        <taxon>Viruses</taxon>
        <taxon>Varidnaviria</taxon>
        <taxon>Bamfordvirae</taxon>
        <taxon>Nucleocytoviricota</taxon>
        <taxon>Pokkesviricetes</taxon>
        <taxon>Chitovirales</taxon>
        <taxon>Poxviridae</taxon>
        <taxon>Chordopoxvirinae</taxon>
        <taxon>Orthopoxvirus</taxon>
        <taxon>Cowpox virus</taxon>
    </lineage>
</organism>
<proteinExistence type="inferred from homology"/>
<dbReference type="EC" id="2.7.4.9"/>
<dbReference type="EMBL" id="X94355">
    <property type="protein sequence ID" value="CAD90718.1"/>
    <property type="status" value="ALT_INIT"/>
    <property type="molecule type" value="Genomic_DNA"/>
</dbReference>
<dbReference type="SMR" id="Q80DS7"/>
<dbReference type="UniPathway" id="UPA00575"/>
<dbReference type="Proteomes" id="UP000137384">
    <property type="component" value="Segment"/>
</dbReference>
<dbReference type="GO" id="GO:0005524">
    <property type="term" value="F:ATP binding"/>
    <property type="evidence" value="ECO:0007669"/>
    <property type="project" value="UniProtKB-KW"/>
</dbReference>
<dbReference type="GO" id="GO:0004798">
    <property type="term" value="F:dTMP kinase activity"/>
    <property type="evidence" value="ECO:0007669"/>
    <property type="project" value="UniProtKB-EC"/>
</dbReference>
<dbReference type="GO" id="GO:0004550">
    <property type="term" value="F:nucleoside diphosphate kinase activity"/>
    <property type="evidence" value="ECO:0007669"/>
    <property type="project" value="TreeGrafter"/>
</dbReference>
<dbReference type="GO" id="GO:0006233">
    <property type="term" value="P:dTDP biosynthetic process"/>
    <property type="evidence" value="ECO:0007669"/>
    <property type="project" value="InterPro"/>
</dbReference>
<dbReference type="GO" id="GO:0006235">
    <property type="term" value="P:dTTP biosynthetic process"/>
    <property type="evidence" value="ECO:0007669"/>
    <property type="project" value="UniProtKB-UniPathway"/>
</dbReference>
<dbReference type="GO" id="GO:0006227">
    <property type="term" value="P:dUDP biosynthetic process"/>
    <property type="evidence" value="ECO:0007669"/>
    <property type="project" value="TreeGrafter"/>
</dbReference>
<dbReference type="Gene3D" id="3.40.50.300">
    <property type="entry name" value="P-loop containing nucleotide triphosphate hydrolases"/>
    <property type="match status" value="1"/>
</dbReference>
<dbReference type="InterPro" id="IPR027417">
    <property type="entry name" value="P-loop_NTPase"/>
</dbReference>
<dbReference type="InterPro" id="IPR039430">
    <property type="entry name" value="Thymidylate_kin-like_dom"/>
</dbReference>
<dbReference type="InterPro" id="IPR018095">
    <property type="entry name" value="Thymidylate_kin_CS"/>
</dbReference>
<dbReference type="InterPro" id="IPR018094">
    <property type="entry name" value="Thymidylate_kinase"/>
</dbReference>
<dbReference type="NCBIfam" id="TIGR00041">
    <property type="entry name" value="DTMP_kinase"/>
    <property type="match status" value="1"/>
</dbReference>
<dbReference type="PANTHER" id="PTHR10344">
    <property type="entry name" value="THYMIDYLATE KINASE"/>
    <property type="match status" value="1"/>
</dbReference>
<dbReference type="PANTHER" id="PTHR10344:SF1">
    <property type="entry name" value="THYMIDYLATE KINASE"/>
    <property type="match status" value="1"/>
</dbReference>
<dbReference type="Pfam" id="PF02223">
    <property type="entry name" value="Thymidylate_kin"/>
    <property type="match status" value="1"/>
</dbReference>
<dbReference type="SUPFAM" id="SSF52540">
    <property type="entry name" value="P-loop containing nucleoside triphosphate hydrolases"/>
    <property type="match status" value="1"/>
</dbReference>
<dbReference type="PROSITE" id="PS01331">
    <property type="entry name" value="THYMIDYLATE_KINASE"/>
    <property type="match status" value="1"/>
</dbReference>
<evidence type="ECO:0000305" key="1"/>
<organismHost>
    <name type="scientific">Bos taurus</name>
    <name type="common">Bovine</name>
    <dbReference type="NCBI Taxonomy" id="9913"/>
</organismHost>
<organismHost>
    <name type="scientific">Felis catus</name>
    <name type="common">Cat</name>
    <name type="synonym">Felis silvestris catus</name>
    <dbReference type="NCBI Taxonomy" id="9685"/>
</organismHost>
<organismHost>
    <name type="scientific">Homo sapiens</name>
    <name type="common">Human</name>
    <dbReference type="NCBI Taxonomy" id="9606"/>
</organismHost>
<organismHost>
    <name type="scientific">Loxodonta africana</name>
    <name type="common">African elephant</name>
    <dbReference type="NCBI Taxonomy" id="9785"/>
</organismHost>
<organismHost>
    <name type="scientific">Microtus agrestis</name>
    <name type="common">Short-tailed field vole</name>
    <dbReference type="NCBI Taxonomy" id="29092"/>
</organismHost>
<organismHost>
    <name type="scientific">Mus musculus</name>
    <name type="common">Mouse</name>
    <dbReference type="NCBI Taxonomy" id="10090"/>
</organismHost>
<organismHost>
    <name type="scientific">Myodes glareolus</name>
    <name type="common">Bank vole</name>
    <name type="synonym">Clethrionomys glareolus</name>
    <dbReference type="NCBI Taxonomy" id="447135"/>
</organismHost>
<accession>Q80DS7</accession>
<gene>
    <name type="primary">TMK</name>
    <name type="ORF">A51R</name>
</gene>
<comment type="catalytic activity">
    <reaction>
        <text>dTMP + ATP = dTDP + ADP</text>
        <dbReference type="Rhea" id="RHEA:13517"/>
        <dbReference type="ChEBI" id="CHEBI:30616"/>
        <dbReference type="ChEBI" id="CHEBI:58369"/>
        <dbReference type="ChEBI" id="CHEBI:63528"/>
        <dbReference type="ChEBI" id="CHEBI:456216"/>
        <dbReference type="EC" id="2.7.4.9"/>
    </reaction>
</comment>
<comment type="pathway">
    <text>Pyrimidine metabolism; dTTP biosynthesis.</text>
</comment>
<comment type="similarity">
    <text evidence="1">Belongs to the thymidylate kinase family.</text>
</comment>
<comment type="sequence caution" evidence="1">
    <conflict type="erroneous initiation">
        <sequence resource="EMBL-CDS" id="CAD90718"/>
    </conflict>
</comment>